<gene>
    <name evidence="8" type="primary">OXI1</name>
    <name evidence="7" type="synonym">AGC2-1</name>
    <name type="ordered locus">At3g25250</name>
    <name type="ORF">MJL12.21</name>
</gene>
<sequence>MLEGDEKQSRALDFNRLEVLSLLGRGAKGVVFLVRDDDAKLLALKVILKEAIEKKKKGRESEDDEYKRVSFEQGVLSRFDHPLFPSLHGVLATDKVIGYAIDYCPGQNLNSLRKMQSESMFSDEIIRFYAAELVLALDYLHNQGIVYRDLKPDNVMIQENGHLMLIDFDLSTNLAPRTPQPSPSLSKPSPTMKRKKRLFRFTSFCNSGISPQESISVHSSSTLAVSDSSGEKSNSFVGTEEYVAPEVISGDGHDFAVDWWSLGVVLYEMLYGATPFRGSNRKETFYRILSKPPNLTGETTSLRDLIRRLLEKDPSRRINVEEIKGHDFFRGVDWEKVILVSRPPYIPAPDDGGDKGTDVNTKMDVENIVQEIFAARQEREKQSGDNNKNANMKIKDNTSGEWVKGLNNNHDLESDNNFLVF</sequence>
<keyword id="KW-0067">ATP-binding</keyword>
<keyword id="KW-0418">Kinase</keyword>
<keyword id="KW-0547">Nucleotide-binding</keyword>
<keyword id="KW-0597">Phosphoprotein</keyword>
<keyword id="KW-0611">Plant defense</keyword>
<keyword id="KW-1185">Reference proteome</keyword>
<keyword id="KW-0723">Serine/threonine-protein kinase</keyword>
<keyword id="KW-0808">Transferase</keyword>
<comment type="function">
    <text evidence="6">Involved in oxidative burst-mediated signaling. Required for basal resistance to P.parasitica infection and root hair growth. Partly required for the activation of MPK3 and MPK6 by hydrogen peroxide and cellulase elicitor.</text>
</comment>
<comment type="catalytic activity">
    <reaction>
        <text>L-seryl-[protein] + ATP = O-phospho-L-seryl-[protein] + ADP + H(+)</text>
        <dbReference type="Rhea" id="RHEA:17989"/>
        <dbReference type="Rhea" id="RHEA-COMP:9863"/>
        <dbReference type="Rhea" id="RHEA-COMP:11604"/>
        <dbReference type="ChEBI" id="CHEBI:15378"/>
        <dbReference type="ChEBI" id="CHEBI:29999"/>
        <dbReference type="ChEBI" id="CHEBI:30616"/>
        <dbReference type="ChEBI" id="CHEBI:83421"/>
        <dbReference type="ChEBI" id="CHEBI:456216"/>
        <dbReference type="EC" id="2.7.11.1"/>
    </reaction>
</comment>
<comment type="catalytic activity">
    <reaction>
        <text>L-threonyl-[protein] + ATP = O-phospho-L-threonyl-[protein] + ADP + H(+)</text>
        <dbReference type="Rhea" id="RHEA:46608"/>
        <dbReference type="Rhea" id="RHEA-COMP:11060"/>
        <dbReference type="Rhea" id="RHEA-COMP:11605"/>
        <dbReference type="ChEBI" id="CHEBI:15378"/>
        <dbReference type="ChEBI" id="CHEBI:30013"/>
        <dbReference type="ChEBI" id="CHEBI:30616"/>
        <dbReference type="ChEBI" id="CHEBI:61977"/>
        <dbReference type="ChEBI" id="CHEBI:456216"/>
        <dbReference type="EC" id="2.7.11.1"/>
    </reaction>
</comment>
<comment type="activity regulation">
    <text evidence="5 6">Activated in response to hydrogen peroxide and cellulase elicitor. Activated by PDK1 in a phosphatidic acid dependent manner.</text>
</comment>
<comment type="subunit">
    <text evidence="5">Interacts with PDK1 and PDK2.</text>
</comment>
<comment type="interaction">
    <interactant intactId="EBI-8574783">
        <id>Q9LSF1</id>
    </interactant>
    <interactant intactId="EBI-4436376">
        <id>O80719</id>
        <label>At2g47060</label>
    </interactant>
    <organismsDiffer>false</organismsDiffer>
    <experiments>4</experiments>
</comment>
<comment type="tissue specificity">
    <text evidence="5 6">Expressed in roots and root hair cells.</text>
</comment>
<comment type="developmental stage">
    <text>Highly expressed in fast-growing organs and dividing cells.</text>
</comment>
<comment type="induction">
    <text evidence="6">By wounding, hydrogen peroxide and cellulase elicitor.</text>
</comment>
<comment type="domain">
    <text evidence="1">The activation loop within the kinase domain is the target of phosphorylation.</text>
</comment>
<comment type="disruption phenotype">
    <text evidence="5 6">Plants have enhanced susceptibility to virulent P.parasitica pathogen and reduced root hair length.</text>
</comment>
<comment type="similarity">
    <text evidence="9">Belongs to the protein kinase superfamily. AGC Ser/Thr protein kinase family.</text>
</comment>
<dbReference type="EC" id="2.7.11.1"/>
<dbReference type="EMBL" id="AB026647">
    <property type="protein sequence ID" value="BAB02084.1"/>
    <property type="molecule type" value="Genomic_DNA"/>
</dbReference>
<dbReference type="EMBL" id="CP002686">
    <property type="protein sequence ID" value="AEE77000.1"/>
    <property type="molecule type" value="Genomic_DNA"/>
</dbReference>
<dbReference type="EMBL" id="BT029732">
    <property type="protein sequence ID" value="ABM06002.1"/>
    <property type="molecule type" value="mRNA"/>
</dbReference>
<dbReference type="RefSeq" id="NP_189162.1">
    <property type="nucleotide sequence ID" value="NM_113431.6"/>
</dbReference>
<dbReference type="SMR" id="Q9LSF1"/>
<dbReference type="BioGRID" id="7450">
    <property type="interactions" value="7"/>
</dbReference>
<dbReference type="ELM" id="Q9LSF1"/>
<dbReference type="FunCoup" id="Q9LSF1">
    <property type="interactions" value="143"/>
</dbReference>
<dbReference type="IntAct" id="Q9LSF1">
    <property type="interactions" value="4"/>
</dbReference>
<dbReference type="MINT" id="Q9LSF1"/>
<dbReference type="STRING" id="3702.Q9LSF1"/>
<dbReference type="iPTMnet" id="Q9LSF1"/>
<dbReference type="PaxDb" id="3702-AT3G25250.1"/>
<dbReference type="EnsemblPlants" id="AT3G25250.1">
    <property type="protein sequence ID" value="AT3G25250.1"/>
    <property type="gene ID" value="AT3G25250"/>
</dbReference>
<dbReference type="GeneID" id="822119"/>
<dbReference type="Gramene" id="AT3G25250.1">
    <property type="protein sequence ID" value="AT3G25250.1"/>
    <property type="gene ID" value="AT3G25250"/>
</dbReference>
<dbReference type="KEGG" id="ath:AT3G25250"/>
<dbReference type="Araport" id="AT3G25250"/>
<dbReference type="TAIR" id="AT3G25250">
    <property type="gene designation" value="AGC2-1"/>
</dbReference>
<dbReference type="eggNOG" id="KOG0610">
    <property type="taxonomic scope" value="Eukaryota"/>
</dbReference>
<dbReference type="HOGENOM" id="CLU_000288_63_30_1"/>
<dbReference type="InParanoid" id="Q9LSF1"/>
<dbReference type="OMA" id="HEMLYAT"/>
<dbReference type="PhylomeDB" id="Q9LSF1"/>
<dbReference type="PRO" id="PR:Q9LSF1"/>
<dbReference type="Proteomes" id="UP000006548">
    <property type="component" value="Chromosome 3"/>
</dbReference>
<dbReference type="ExpressionAtlas" id="Q9LSF1">
    <property type="expression patterns" value="baseline and differential"/>
</dbReference>
<dbReference type="GO" id="GO:0005524">
    <property type="term" value="F:ATP binding"/>
    <property type="evidence" value="ECO:0007669"/>
    <property type="project" value="UniProtKB-KW"/>
</dbReference>
<dbReference type="GO" id="GO:0016301">
    <property type="term" value="F:kinase activity"/>
    <property type="evidence" value="ECO:0000250"/>
    <property type="project" value="TAIR"/>
</dbReference>
<dbReference type="GO" id="GO:0004672">
    <property type="term" value="F:protein kinase activity"/>
    <property type="evidence" value="ECO:0000314"/>
    <property type="project" value="TAIR"/>
</dbReference>
<dbReference type="GO" id="GO:0019901">
    <property type="term" value="F:protein kinase binding"/>
    <property type="evidence" value="ECO:0000353"/>
    <property type="project" value="UniProtKB"/>
</dbReference>
<dbReference type="GO" id="GO:0106310">
    <property type="term" value="F:protein serine kinase activity"/>
    <property type="evidence" value="ECO:0007669"/>
    <property type="project" value="RHEA"/>
</dbReference>
<dbReference type="GO" id="GO:0004674">
    <property type="term" value="F:protein serine/threonine kinase activity"/>
    <property type="evidence" value="ECO:0007669"/>
    <property type="project" value="UniProtKB-KW"/>
</dbReference>
<dbReference type="GO" id="GO:0071456">
    <property type="term" value="P:cellular response to hypoxia"/>
    <property type="evidence" value="ECO:0007007"/>
    <property type="project" value="TAIR"/>
</dbReference>
<dbReference type="GO" id="GO:0006952">
    <property type="term" value="P:defense response"/>
    <property type="evidence" value="ECO:0007669"/>
    <property type="project" value="UniProtKB-KW"/>
</dbReference>
<dbReference type="GO" id="GO:0043065">
    <property type="term" value="P:positive regulation of apoptotic process"/>
    <property type="evidence" value="ECO:0000315"/>
    <property type="project" value="TAIR"/>
</dbReference>
<dbReference type="GO" id="GO:0006468">
    <property type="term" value="P:protein phosphorylation"/>
    <property type="evidence" value="ECO:0000314"/>
    <property type="project" value="TAIR"/>
</dbReference>
<dbReference type="GO" id="GO:0006979">
    <property type="term" value="P:response to oxidative stress"/>
    <property type="evidence" value="ECO:0000270"/>
    <property type="project" value="TAIR"/>
</dbReference>
<dbReference type="GO" id="GO:0009611">
    <property type="term" value="P:response to wounding"/>
    <property type="evidence" value="ECO:0000270"/>
    <property type="project" value="TAIR"/>
</dbReference>
<dbReference type="FunFam" id="1.10.510.10:FF:000294">
    <property type="entry name" value="Serine/threonine-protein kinase OXI1"/>
    <property type="match status" value="1"/>
</dbReference>
<dbReference type="FunFam" id="1.10.510.10:FF:000312">
    <property type="entry name" value="Serine/threonine-protein kinase OXI1"/>
    <property type="match status" value="1"/>
</dbReference>
<dbReference type="FunFam" id="3.30.200.20:FF:001233">
    <property type="entry name" value="Serine/threonine-protein kinase OXI1"/>
    <property type="match status" value="1"/>
</dbReference>
<dbReference type="Gene3D" id="3.30.200.20">
    <property type="entry name" value="Phosphorylase Kinase, domain 1"/>
    <property type="match status" value="1"/>
</dbReference>
<dbReference type="Gene3D" id="1.10.510.10">
    <property type="entry name" value="Transferase(Phosphotransferase) domain 1"/>
    <property type="match status" value="2"/>
</dbReference>
<dbReference type="InterPro" id="IPR000961">
    <property type="entry name" value="AGC-kinase_C"/>
</dbReference>
<dbReference type="InterPro" id="IPR011009">
    <property type="entry name" value="Kinase-like_dom_sf"/>
</dbReference>
<dbReference type="InterPro" id="IPR000719">
    <property type="entry name" value="Prot_kinase_dom"/>
</dbReference>
<dbReference type="InterPro" id="IPR008271">
    <property type="entry name" value="Ser/Thr_kinase_AS"/>
</dbReference>
<dbReference type="PANTHER" id="PTHR45637">
    <property type="entry name" value="FLIPPASE KINASE 1-RELATED"/>
    <property type="match status" value="1"/>
</dbReference>
<dbReference type="Pfam" id="PF00069">
    <property type="entry name" value="Pkinase"/>
    <property type="match status" value="2"/>
</dbReference>
<dbReference type="SMART" id="SM00220">
    <property type="entry name" value="S_TKc"/>
    <property type="match status" value="1"/>
</dbReference>
<dbReference type="SUPFAM" id="SSF56112">
    <property type="entry name" value="Protein kinase-like (PK-like)"/>
    <property type="match status" value="1"/>
</dbReference>
<dbReference type="PROSITE" id="PS51285">
    <property type="entry name" value="AGC_KINASE_CTER"/>
    <property type="match status" value="1"/>
</dbReference>
<dbReference type="PROSITE" id="PS50011">
    <property type="entry name" value="PROTEIN_KINASE_DOM"/>
    <property type="match status" value="1"/>
</dbReference>
<dbReference type="PROSITE" id="PS00108">
    <property type="entry name" value="PROTEIN_KINASE_ST"/>
    <property type="match status" value="1"/>
</dbReference>
<feature type="chain" id="PRO_0000245827" description="Serine/threonine-protein kinase OXI1">
    <location>
        <begin position="1"/>
        <end position="421"/>
    </location>
</feature>
<feature type="domain" description="Protein kinase" evidence="2">
    <location>
        <begin position="17"/>
        <end position="329"/>
    </location>
</feature>
<feature type="domain" description="AGC-kinase C-terminal" evidence="3">
    <location>
        <begin position="330"/>
        <end position="421"/>
    </location>
</feature>
<feature type="region of interest" description="Activation loop" evidence="1">
    <location>
        <begin position="167"/>
        <end position="246"/>
    </location>
</feature>
<feature type="short sequence motif" description="PIF">
    <location>
        <begin position="418"/>
        <end position="421"/>
    </location>
</feature>
<feature type="active site" description="Proton acceptor" evidence="2 4">
    <location>
        <position position="149"/>
    </location>
</feature>
<feature type="binding site" evidence="2">
    <location>
        <begin position="23"/>
        <end position="31"/>
    </location>
    <ligand>
        <name>ATP</name>
        <dbReference type="ChEBI" id="CHEBI:30616"/>
    </ligand>
</feature>
<feature type="binding site" evidence="2">
    <location>
        <position position="45"/>
    </location>
    <ligand>
        <name>ATP</name>
        <dbReference type="ChEBI" id="CHEBI:30616"/>
    </ligand>
</feature>
<feature type="modified residue" description="Phosphoserine; by PDPK1" evidence="9">
    <location>
        <position position="235"/>
    </location>
</feature>
<feature type="mutagenesis site" description="Abolishes catalytic activity." evidence="5">
    <original>K</original>
    <variation>A</variation>
    <location>
        <position position="45"/>
    </location>
</feature>
<feature type="mutagenesis site" description="Strongly reduces catalytic activity." evidence="5">
    <original>S</original>
    <variation>A</variation>
    <location>
        <position position="235"/>
    </location>
</feature>
<feature type="mutagenesis site" description="Loss of interaction with PDPK1 and PDK2; when associated with A-421." evidence="5">
    <original>F</original>
    <variation>A</variation>
    <location>
        <position position="418"/>
    </location>
</feature>
<feature type="mutagenesis site" description="Loss of interaction with PDPK1 and PDK2; when associated with A-418." evidence="5">
    <original>F</original>
    <variation>A</variation>
    <location>
        <position position="421"/>
    </location>
</feature>
<accession>Q9LSF1</accession>
<accession>A1L4U5</accession>
<protein>
    <recommendedName>
        <fullName>Serine/threonine-protein kinase OXI1</fullName>
        <ecNumber>2.7.11.1</ecNumber>
    </recommendedName>
    <alternativeName>
        <fullName evidence="7">AGC serine/threonine-protein kinase subfamily 2 member 1</fullName>
    </alternativeName>
    <alternativeName>
        <fullName evidence="8">Protein OXIDATIVE SIGNAL-INDUCIBLE 1</fullName>
    </alternativeName>
</protein>
<organism>
    <name type="scientific">Arabidopsis thaliana</name>
    <name type="common">Mouse-ear cress</name>
    <dbReference type="NCBI Taxonomy" id="3702"/>
    <lineage>
        <taxon>Eukaryota</taxon>
        <taxon>Viridiplantae</taxon>
        <taxon>Streptophyta</taxon>
        <taxon>Embryophyta</taxon>
        <taxon>Tracheophyta</taxon>
        <taxon>Spermatophyta</taxon>
        <taxon>Magnoliopsida</taxon>
        <taxon>eudicotyledons</taxon>
        <taxon>Gunneridae</taxon>
        <taxon>Pentapetalae</taxon>
        <taxon>rosids</taxon>
        <taxon>malvids</taxon>
        <taxon>Brassicales</taxon>
        <taxon>Brassicaceae</taxon>
        <taxon>Camelineae</taxon>
        <taxon>Arabidopsis</taxon>
    </lineage>
</organism>
<proteinExistence type="evidence at protein level"/>
<name>OXI1_ARATH</name>
<evidence type="ECO:0000250" key="1"/>
<evidence type="ECO:0000255" key="2">
    <source>
        <dbReference type="PROSITE-ProRule" id="PRU00159"/>
    </source>
</evidence>
<evidence type="ECO:0000255" key="3">
    <source>
        <dbReference type="PROSITE-ProRule" id="PRU00618"/>
    </source>
</evidence>
<evidence type="ECO:0000255" key="4">
    <source>
        <dbReference type="PROSITE-ProRule" id="PRU10027"/>
    </source>
</evidence>
<evidence type="ECO:0000269" key="5">
    <source>
    </source>
</evidence>
<evidence type="ECO:0000269" key="6">
    <source>
    </source>
</evidence>
<evidence type="ECO:0000303" key="7">
    <source>
    </source>
</evidence>
<evidence type="ECO:0000303" key="8">
    <source>
    </source>
</evidence>
<evidence type="ECO:0000305" key="9"/>
<reference key="1">
    <citation type="journal article" date="2000" name="DNA Res.">
        <title>Structural analysis of Arabidopsis thaliana chromosome 3. I. Sequence features of the regions of 4,504,864 bp covered by sixty P1 and TAC clones.</title>
        <authorList>
            <person name="Sato S."/>
            <person name="Nakamura Y."/>
            <person name="Kaneko T."/>
            <person name="Katoh T."/>
            <person name="Asamizu E."/>
            <person name="Tabata S."/>
        </authorList>
    </citation>
    <scope>NUCLEOTIDE SEQUENCE [LARGE SCALE GENOMIC DNA]</scope>
    <source>
        <strain>cv. Columbia</strain>
    </source>
</reference>
<reference key="2">
    <citation type="journal article" date="2017" name="Plant J.">
        <title>Araport11: a complete reannotation of the Arabidopsis thaliana reference genome.</title>
        <authorList>
            <person name="Cheng C.Y."/>
            <person name="Krishnakumar V."/>
            <person name="Chan A.P."/>
            <person name="Thibaud-Nissen F."/>
            <person name="Schobel S."/>
            <person name="Town C.D."/>
        </authorList>
    </citation>
    <scope>GENOME REANNOTATION</scope>
    <source>
        <strain>cv. Columbia</strain>
    </source>
</reference>
<reference key="3">
    <citation type="submission" date="2006-12" db="EMBL/GenBank/DDBJ databases">
        <title>Arabidopsis ORF clones.</title>
        <authorList>
            <person name="Bautista V.R."/>
            <person name="Kim C.J."/>
            <person name="Chen H."/>
            <person name="Wu S.Y."/>
            <person name="De Los Reyes C."/>
            <person name="Ecker J.R."/>
        </authorList>
    </citation>
    <scope>NUCLEOTIDE SEQUENCE [LARGE SCALE MRNA]</scope>
    <source>
        <strain>cv. Columbia</strain>
    </source>
</reference>
<reference key="4">
    <citation type="journal article" date="2003" name="Trends Plant Sci.">
        <title>Growth signalling pathways in Arabidopsis and the AGC protein kinases.</title>
        <authorList>
            <person name="Boegre L."/>
            <person name="Okresz L."/>
            <person name="Henriques R."/>
            <person name="Anthony R.G."/>
        </authorList>
    </citation>
    <scope>GENE FAMILY</scope>
    <scope>REVIEW</scope>
</reference>
<reference key="5">
    <citation type="journal article" date="2004" name="EMBO J.">
        <title>A protein kinase target of a PDK1 signalling pathway is involved in root hair growth in Arabidopsis.</title>
        <authorList>
            <person name="Anthony R.G."/>
            <person name="Henriques R."/>
            <person name="Helfer A."/>
            <person name="Meszaros T."/>
            <person name="Rios G."/>
            <person name="Testerink C."/>
            <person name="Munnik T."/>
            <person name="Deak M."/>
            <person name="Koncz C."/>
            <person name="Boegre L."/>
        </authorList>
    </citation>
    <scope>ACTIVITY REGULATION</scope>
    <scope>TISSUE SPECIFICITY</scope>
    <scope>DISRUPTION PHENOTYPE</scope>
    <scope>INTERACTION WITH PDK1 AND PDK2</scope>
    <scope>MUTAGENESIS OF LYS-45; SER-235; PHE-418 AND PHE-421</scope>
</reference>
<reference key="6">
    <citation type="journal article" date="2004" name="Nature">
        <title>OXI1 kinase is necessary for oxidative burst-mediated signalling in Arabidopsis.</title>
        <authorList>
            <person name="Rentel M.C."/>
            <person name="Lecourieux D."/>
            <person name="Ouaked F."/>
            <person name="Usher S.L."/>
            <person name="Petersen L."/>
            <person name="Okamoto H."/>
            <person name="Knight H."/>
            <person name="Peck S.C."/>
            <person name="Grierson C.S."/>
            <person name="Hirt H."/>
            <person name="Knight M.R."/>
        </authorList>
    </citation>
    <scope>FUNCTION</scope>
    <scope>ACTIVITY REGULATION</scope>
    <scope>TISSUE SPECIFICITY</scope>
    <scope>INDUCTION</scope>
    <scope>DISRUPTION PHENOTYPE</scope>
</reference>